<reference key="1">
    <citation type="journal article" date="2010" name="PLoS ONE">
        <title>The complete genome sequence of Cupriavidus metallidurans strain CH34, a master survivalist in harsh and anthropogenic environments.</title>
        <authorList>
            <person name="Janssen P.J."/>
            <person name="Van Houdt R."/>
            <person name="Moors H."/>
            <person name="Monsieurs P."/>
            <person name="Morin N."/>
            <person name="Michaux A."/>
            <person name="Benotmane M.A."/>
            <person name="Leys N."/>
            <person name="Vallaeys T."/>
            <person name="Lapidus A."/>
            <person name="Monchy S."/>
            <person name="Medigue C."/>
            <person name="Taghavi S."/>
            <person name="McCorkle S."/>
            <person name="Dunn J."/>
            <person name="van der Lelie D."/>
            <person name="Mergeay M."/>
        </authorList>
    </citation>
    <scope>NUCLEOTIDE SEQUENCE [LARGE SCALE GENOMIC DNA]</scope>
    <source>
        <strain>ATCC 43123 / DSM 2839 / NBRC 102507 / CH34</strain>
    </source>
</reference>
<keyword id="KW-0963">Cytoplasm</keyword>
<keyword id="KW-0275">Fatty acid biosynthesis</keyword>
<keyword id="KW-0276">Fatty acid metabolism</keyword>
<keyword id="KW-0444">Lipid biosynthesis</keyword>
<keyword id="KW-0443">Lipid metabolism</keyword>
<keyword id="KW-0460">Magnesium</keyword>
<keyword id="KW-0479">Metal-binding</keyword>
<keyword id="KW-1185">Reference proteome</keyword>
<keyword id="KW-0808">Transferase</keyword>
<dbReference type="EC" id="2.7.8.7" evidence="1"/>
<dbReference type="EMBL" id="CP000352">
    <property type="protein sequence ID" value="ABF09291.1"/>
    <property type="molecule type" value="Genomic_DNA"/>
</dbReference>
<dbReference type="RefSeq" id="WP_011517009.1">
    <property type="nucleotide sequence ID" value="NC_007973.1"/>
</dbReference>
<dbReference type="SMR" id="Q1LKN5"/>
<dbReference type="STRING" id="266264.Rmet_2414"/>
<dbReference type="KEGG" id="rme:Rmet_2414"/>
<dbReference type="eggNOG" id="COG0736">
    <property type="taxonomic scope" value="Bacteria"/>
</dbReference>
<dbReference type="HOGENOM" id="CLU_089696_3_1_4"/>
<dbReference type="Proteomes" id="UP000002429">
    <property type="component" value="Chromosome"/>
</dbReference>
<dbReference type="GO" id="GO:0005737">
    <property type="term" value="C:cytoplasm"/>
    <property type="evidence" value="ECO:0007669"/>
    <property type="project" value="UniProtKB-SubCell"/>
</dbReference>
<dbReference type="GO" id="GO:0008897">
    <property type="term" value="F:holo-[acyl-carrier-protein] synthase activity"/>
    <property type="evidence" value="ECO:0007669"/>
    <property type="project" value="UniProtKB-UniRule"/>
</dbReference>
<dbReference type="GO" id="GO:0000287">
    <property type="term" value="F:magnesium ion binding"/>
    <property type="evidence" value="ECO:0007669"/>
    <property type="project" value="UniProtKB-UniRule"/>
</dbReference>
<dbReference type="GO" id="GO:0006633">
    <property type="term" value="P:fatty acid biosynthetic process"/>
    <property type="evidence" value="ECO:0007669"/>
    <property type="project" value="UniProtKB-UniRule"/>
</dbReference>
<dbReference type="Gene3D" id="3.90.470.20">
    <property type="entry name" value="4'-phosphopantetheinyl transferase domain"/>
    <property type="match status" value="1"/>
</dbReference>
<dbReference type="HAMAP" id="MF_00101">
    <property type="entry name" value="AcpS"/>
    <property type="match status" value="1"/>
</dbReference>
<dbReference type="InterPro" id="IPR008278">
    <property type="entry name" value="4-PPantetheinyl_Trfase_dom"/>
</dbReference>
<dbReference type="InterPro" id="IPR037143">
    <property type="entry name" value="4-PPantetheinyl_Trfase_dom_sf"/>
</dbReference>
<dbReference type="InterPro" id="IPR002582">
    <property type="entry name" value="ACPS"/>
</dbReference>
<dbReference type="InterPro" id="IPR004568">
    <property type="entry name" value="Ppantetheine-prot_Trfase_dom"/>
</dbReference>
<dbReference type="NCBIfam" id="TIGR00516">
    <property type="entry name" value="acpS"/>
    <property type="match status" value="1"/>
</dbReference>
<dbReference type="NCBIfam" id="TIGR00556">
    <property type="entry name" value="pantethn_trn"/>
    <property type="match status" value="1"/>
</dbReference>
<dbReference type="Pfam" id="PF01648">
    <property type="entry name" value="ACPS"/>
    <property type="match status" value="1"/>
</dbReference>
<dbReference type="SUPFAM" id="SSF56214">
    <property type="entry name" value="4'-phosphopantetheinyl transferase"/>
    <property type="match status" value="1"/>
</dbReference>
<feature type="chain" id="PRO_1000008474" description="Holo-[acyl-carrier-protein] synthase">
    <location>
        <begin position="1"/>
        <end position="143"/>
    </location>
</feature>
<feature type="binding site" evidence="1">
    <location>
        <position position="8"/>
    </location>
    <ligand>
        <name>Mg(2+)</name>
        <dbReference type="ChEBI" id="CHEBI:18420"/>
    </ligand>
</feature>
<feature type="binding site" evidence="1">
    <location>
        <position position="62"/>
    </location>
    <ligand>
        <name>Mg(2+)</name>
        <dbReference type="ChEBI" id="CHEBI:18420"/>
    </ligand>
</feature>
<protein>
    <recommendedName>
        <fullName evidence="1">Holo-[acyl-carrier-protein] synthase</fullName>
        <shortName evidence="1">Holo-ACP synthase</shortName>
        <ecNumber evidence="1">2.7.8.7</ecNumber>
    </recommendedName>
    <alternativeName>
        <fullName evidence="1">4'-phosphopantetheinyl transferase AcpS</fullName>
    </alternativeName>
</protein>
<comment type="function">
    <text evidence="1">Transfers the 4'-phosphopantetheine moiety from coenzyme A to a Ser of acyl-carrier-protein.</text>
</comment>
<comment type="catalytic activity">
    <reaction evidence="1">
        <text>apo-[ACP] + CoA = holo-[ACP] + adenosine 3',5'-bisphosphate + H(+)</text>
        <dbReference type="Rhea" id="RHEA:12068"/>
        <dbReference type="Rhea" id="RHEA-COMP:9685"/>
        <dbReference type="Rhea" id="RHEA-COMP:9690"/>
        <dbReference type="ChEBI" id="CHEBI:15378"/>
        <dbReference type="ChEBI" id="CHEBI:29999"/>
        <dbReference type="ChEBI" id="CHEBI:57287"/>
        <dbReference type="ChEBI" id="CHEBI:58343"/>
        <dbReference type="ChEBI" id="CHEBI:64479"/>
        <dbReference type="EC" id="2.7.8.7"/>
    </reaction>
</comment>
<comment type="cofactor">
    <cofactor evidence="1">
        <name>Mg(2+)</name>
        <dbReference type="ChEBI" id="CHEBI:18420"/>
    </cofactor>
</comment>
<comment type="subcellular location">
    <subcellularLocation>
        <location evidence="1">Cytoplasm</location>
    </subcellularLocation>
</comment>
<comment type="similarity">
    <text evidence="1">Belongs to the P-Pant transferase superfamily. AcpS family.</text>
</comment>
<proteinExistence type="inferred from homology"/>
<sequence>MIYGVGTDIIQIDRVRGVMERTRGRFVEKILGPREMKIYLARKARSEKRGLAFLCTRFAAKEAFSKAIGLGMRWPMTWRAMELLNQPSGEPAPHCTGELAEWVRERGLTVRVSVSDEHEYAVAFAIAERGGQLAAPQSEPASN</sequence>
<accession>Q1LKN5</accession>
<name>ACPS_CUPMC</name>
<gene>
    <name evidence="1" type="primary">acpS</name>
    <name type="ordered locus">Rmet_2414</name>
</gene>
<evidence type="ECO:0000255" key="1">
    <source>
        <dbReference type="HAMAP-Rule" id="MF_00101"/>
    </source>
</evidence>
<organism>
    <name type="scientific">Cupriavidus metallidurans (strain ATCC 43123 / DSM 2839 / NBRC 102507 / CH34)</name>
    <name type="common">Ralstonia metallidurans</name>
    <dbReference type="NCBI Taxonomy" id="266264"/>
    <lineage>
        <taxon>Bacteria</taxon>
        <taxon>Pseudomonadati</taxon>
        <taxon>Pseudomonadota</taxon>
        <taxon>Betaproteobacteria</taxon>
        <taxon>Burkholderiales</taxon>
        <taxon>Burkholderiaceae</taxon>
        <taxon>Cupriavidus</taxon>
    </lineage>
</organism>